<feature type="signal peptide" evidence="5">
    <location>
        <begin position="1"/>
        <end position="24"/>
    </location>
</feature>
<feature type="chain" id="PRO_0000342892" description="Amine oxidase [copper-containing] gamma 1">
    <location>
        <begin position="25"/>
        <end position="712"/>
    </location>
</feature>
<feature type="active site" description="Proton acceptor" evidence="2">
    <location>
        <position position="354"/>
    </location>
</feature>
<feature type="active site" description="Schiff-base intermediate with substrate; via topaquinone" evidence="2">
    <location>
        <position position="442"/>
    </location>
</feature>
<feature type="binding site" evidence="2">
    <location>
        <begin position="352"/>
        <end position="363"/>
    </location>
    <ligand>
        <name>substrate</name>
    </ligand>
</feature>
<feature type="binding site" evidence="3">
    <location>
        <begin position="439"/>
        <end position="444"/>
    </location>
    <ligand>
        <name>substrate</name>
    </ligand>
</feature>
<feature type="binding site" evidence="2">
    <location>
        <position position="499"/>
    </location>
    <ligand>
        <name>Cu cation</name>
        <dbReference type="ChEBI" id="CHEBI:23378"/>
    </ligand>
</feature>
<feature type="binding site" evidence="2">
    <location>
        <position position="501"/>
    </location>
    <ligand>
        <name>Cu cation</name>
        <dbReference type="ChEBI" id="CHEBI:23378"/>
    </ligand>
</feature>
<feature type="binding site" evidence="4">
    <location>
        <position position="508"/>
    </location>
    <ligand>
        <name>Mn(2+)</name>
        <dbReference type="ChEBI" id="CHEBI:29035"/>
    </ligand>
</feature>
<feature type="binding site" evidence="1">
    <location>
        <position position="509"/>
    </location>
    <ligand>
        <name>Mn(2+)</name>
        <dbReference type="ChEBI" id="CHEBI:29035"/>
    </ligand>
</feature>
<feature type="binding site" evidence="4">
    <location>
        <position position="510"/>
    </location>
    <ligand>
        <name>Mn(2+)</name>
        <dbReference type="ChEBI" id="CHEBI:29035"/>
    </ligand>
</feature>
<feature type="binding site" evidence="4">
    <location>
        <position position="651"/>
    </location>
    <ligand>
        <name>Mn(2+)</name>
        <dbReference type="ChEBI" id="CHEBI:29035"/>
    </ligand>
</feature>
<feature type="binding site" evidence="4">
    <location>
        <position position="652"/>
    </location>
    <ligand>
        <name>Mn(2+)</name>
        <dbReference type="ChEBI" id="CHEBI:29035"/>
    </ligand>
</feature>
<feature type="binding site" evidence="2">
    <location>
        <position position="662"/>
    </location>
    <ligand>
        <name>Cu cation</name>
        <dbReference type="ChEBI" id="CHEBI:23378"/>
    </ligand>
</feature>
<feature type="modified residue" description="2',4',5'-topaquinone" evidence="2">
    <location>
        <position position="442"/>
    </location>
</feature>
<feature type="glycosylation site" description="N-linked (GlcNAc...) asparagine" evidence="6">
    <location>
        <position position="146"/>
    </location>
</feature>
<feature type="glycosylation site" description="N-linked (GlcNAc...) asparagine" evidence="6">
    <location>
        <position position="173"/>
    </location>
</feature>
<feature type="glycosylation site" description="N-linked (GlcNAc...) asparagine" evidence="6">
    <location>
        <position position="516"/>
    </location>
</feature>
<feature type="glycosylation site" description="N-linked (GlcNAc...) asparagine" evidence="6">
    <location>
        <position position="617"/>
    </location>
</feature>
<feature type="disulfide bond" evidence="4">
    <location>
        <begin position="188"/>
        <end position="210"/>
    </location>
</feature>
<feature type="disulfide bond" evidence="2">
    <location>
        <begin position="373"/>
        <end position="399"/>
    </location>
</feature>
<feature type="sequence conflict" description="In Ref. 3; AAO42785." evidence="13" ref="3">
    <original>E</original>
    <variation>K</variation>
    <location>
        <position position="201"/>
    </location>
</feature>
<organism>
    <name type="scientific">Arabidopsis thaliana</name>
    <name type="common">Mouse-ear cress</name>
    <dbReference type="NCBI Taxonomy" id="3702"/>
    <lineage>
        <taxon>Eukaryota</taxon>
        <taxon>Viridiplantae</taxon>
        <taxon>Streptophyta</taxon>
        <taxon>Embryophyta</taxon>
        <taxon>Tracheophyta</taxon>
        <taxon>Spermatophyta</taxon>
        <taxon>Magnoliopsida</taxon>
        <taxon>eudicotyledons</taxon>
        <taxon>Gunneridae</taxon>
        <taxon>Pentapetalae</taxon>
        <taxon>rosids</taxon>
        <taxon>malvids</taxon>
        <taxon>Brassicales</taxon>
        <taxon>Brassicaceae</taxon>
        <taxon>Camelineae</taxon>
        <taxon>Arabidopsis</taxon>
    </lineage>
</organism>
<evidence type="ECO:0000250" key="1"/>
<evidence type="ECO:0000250" key="2">
    <source>
        <dbReference type="UniProtKB" id="P12807"/>
    </source>
</evidence>
<evidence type="ECO:0000250" key="3">
    <source>
        <dbReference type="UniProtKB" id="P46883"/>
    </source>
</evidence>
<evidence type="ECO:0000250" key="4">
    <source>
        <dbReference type="UniProtKB" id="Q43077"/>
    </source>
</evidence>
<evidence type="ECO:0000255" key="5"/>
<evidence type="ECO:0000255" key="6">
    <source>
        <dbReference type="PROSITE-ProRule" id="PRU00498"/>
    </source>
</evidence>
<evidence type="ECO:0000269" key="7">
    <source>
    </source>
</evidence>
<evidence type="ECO:0000269" key="8">
    <source>
    </source>
</evidence>
<evidence type="ECO:0000269" key="9">
    <source>
    </source>
</evidence>
<evidence type="ECO:0000303" key="10">
    <source>
    </source>
</evidence>
<evidence type="ECO:0000303" key="11">
    <source>
    </source>
</evidence>
<evidence type="ECO:0000303" key="12">
    <source>
    </source>
</evidence>
<evidence type="ECO:0000305" key="13"/>
<evidence type="ECO:0000312" key="14">
    <source>
        <dbReference type="Araport" id="AT1G62810"/>
    </source>
</evidence>
<evidence type="ECO:0000312" key="15">
    <source>
        <dbReference type="EMBL" id="AAF19542.1"/>
    </source>
</evidence>
<sequence>MAEPSFARLFLLFFSFLLIFATYSWVFGPDSGFLFGTRVRKTLGSNRQVHVDHSLEKPHHPLDPLTVREINRVRTILSNHDPGFGSGSATIHSMALDEPEKSRVVQWKKGNKLLSRRAAVVAYWGGQTHEITVDLDSGRVVSDVINRTSGYPILTLNDVFAASQVPLKSLEFNRSIEARGVKFSDLACITPFAGWFGSEEEGRRVIRVQCFTLQGTTNYFMRPLEGLYVTVDLDKLEVIKIIDKGPIPIPKASGTEYRFGVQNKPVHMDRINPISMEQPDGPSFRVEDGHLVKWANWVFHVKADQRAGMIISQATVRDSETGEPRSVMYKGFPSELFVPYMDPEEGWYYKGYMDAGELGLGPTAMPLVPLNDCPRNSYYIDGVFASPDGKPIVQPNMICLFERYAGDISWRHSEILFANADIRESRPKVTLVARMATSVGNYDYIFDWEFQTDGLIRVTVAASGMLMVKGTPYDNVDDLGDREDDAGPLISENVIGVVHDHFITFHLDMDIDGPMNNSLVKVHLEKQRVPTGKSPRKSYLKVKKYIAKTEKDAQIKLSLYDPYEFHIVNPNRKSRVGNPAGYRIVPGGNAASLLDHDDPPQIRGAFTNNQIWVTPYNRSEQYAGGVLIYQSQGDDTLQVWSDRDRSIENKDIVLWYTLGFHHVPCQEDYPVMPTVAASFELKPANFFESNPILGSAPFFEKDLPVCRPFASS</sequence>
<comment type="function">
    <text evidence="7 8">Copper amine oxidase that can use putrescine and spermidine as substrates (PubMed:23915037). Required for abscisic acid- (ABA) and polyamine- (PA) and H(2)O(2)-dependent induced nitric oxide (NO) biosynthesis (PubMed:21471330). Involved in ABA signal transduction and in responses to osmotic stress (PubMed:21471330).</text>
</comment>
<comment type="catalytic activity">
    <reaction evidence="8">
        <text>a primary methyl amine + O2 + H2O = an aldehyde + H2O2 + NH4(+)</text>
        <dbReference type="Rhea" id="RHEA:16153"/>
        <dbReference type="ChEBI" id="CHEBI:15377"/>
        <dbReference type="ChEBI" id="CHEBI:15379"/>
        <dbReference type="ChEBI" id="CHEBI:16240"/>
        <dbReference type="ChEBI" id="CHEBI:17478"/>
        <dbReference type="ChEBI" id="CHEBI:28938"/>
        <dbReference type="ChEBI" id="CHEBI:228804"/>
        <dbReference type="EC" id="1.4.3.21"/>
    </reaction>
    <physiologicalReaction direction="left-to-right" evidence="8">
        <dbReference type="Rhea" id="RHEA:16154"/>
    </physiologicalReaction>
</comment>
<comment type="cofactor">
    <cofactor evidence="3">
        <name>Cu cation</name>
        <dbReference type="ChEBI" id="CHEBI:23378"/>
    </cofactor>
    <cofactor evidence="2">
        <name>Zn(2+)</name>
        <dbReference type="ChEBI" id="CHEBI:29105"/>
    </cofactor>
    <text evidence="2 3">Binds 1 copper ion per subunit (By similarity). Can also use zinc ion as cofactor (By similarity).</text>
</comment>
<comment type="cofactor">
    <cofactor evidence="3">
        <name>L-topaquinone</name>
        <dbReference type="ChEBI" id="CHEBI:79027"/>
    </cofactor>
    <text evidence="3">Contains 1 topaquinone per subunit.</text>
</comment>
<comment type="cofactor">
    <cofactor evidence="4">
        <name>Mn(2+)</name>
        <dbReference type="ChEBI" id="CHEBI:29035"/>
    </cofactor>
    <text evidence="4">Binds 1 Mn(2+) ion per subunit.</text>
</comment>
<comment type="pathway">
    <text evidence="8">Amine and polyamine degradation; putrescine degradation.</text>
</comment>
<comment type="subunit">
    <text evidence="3">Homodimer.</text>
</comment>
<comment type="subcellular location">
    <subcellularLocation>
        <location evidence="8">Secreted</location>
        <location evidence="8">Extracellular space</location>
        <location evidence="8">Apoplast</location>
    </subcellularLocation>
</comment>
<comment type="tissue specificity">
    <text evidence="7 8 9">Mostly expressed in roots, stems and flowers, and, at lower levels, in leaves and cotyledons.</text>
</comment>
<comment type="developmental stage">
    <text evidence="7 8 9">Accumulates during aging (PubMed:21471330, PubMed:23915037). In young seedlings, expressed in hydathodes of new emerging leaves and cotyledons as well as in vascular tissues of new emerging leaves and in cortical root cells at the division/elongation transition zone (PubMed:31862580). Observed in shoot apex, in hypocotyls and hypocotyl/root junction (PubMed:31862580).</text>
</comment>
<comment type="induction">
    <text evidence="7 8 9">Induced transiently by auxin (IAA) (PubMed:31862580). Strongly induced by salicylic acid (SA), and, to a lower extent, by jasmonic acid (MeJA) and flagellin 22 (fgl22) (PubMed:23915037, PubMed:31862580). Triggered by abcisic acid (ABA) (PubMed:21471330, PubMed:23915037, PubMed:31862580). Induced during wounding, dehydration recovery, and treatment with putrescine (Put) (PubMed:31862580).</text>
</comment>
<comment type="PTM">
    <text evidence="3">Topaquinone (TPQ) is generated by copper-dependent autoxidation of a specific tyrosyl residue.</text>
</comment>
<comment type="disruption phenotype">
    <text evidence="7">Impaired in nitric oxide (NO) production in response to polyamines (PA) and abscisic acid (ABA) associated with reduced levels of hydrogen preroxide (H(2)O(2)) (PubMed:21471330). Reduced sensibility to ABA leading to a lower induction of ABA-responsive genes in response to ABA as well as abnormal growth regulation (PubMed:21471330). Altered responses to osmotic stress (PubMed:21471330).</text>
</comment>
<comment type="similarity">
    <text evidence="13">Belongs to the copper/topaquinone oxidase family.</text>
</comment>
<comment type="sequence caution" evidence="13">
    <conflict type="erroneous gene model prediction">
        <sequence resource="EMBL-CDS" id="AAF19542"/>
    </conflict>
    <text>The predicted gene has been split into 3 genes: At1g62810, At1g62820 and At1g62830.</text>
</comment>
<gene>
    <name evidence="12" type="primary">CuAOgamma1</name>
    <name evidence="10 11" type="synonym">CuAO1</name>
    <name evidence="14" type="ordered locus">At1g62810</name>
    <name evidence="15" type="ORF">F23N19.18</name>
</gene>
<dbReference type="EC" id="1.4.3.21" evidence="8"/>
<dbReference type="EMBL" id="AC007190">
    <property type="protein sequence ID" value="AAF19542.1"/>
    <property type="status" value="ALT_SEQ"/>
    <property type="molecule type" value="Genomic_DNA"/>
</dbReference>
<dbReference type="EMBL" id="CP002684">
    <property type="protein sequence ID" value="AEE34008.1"/>
    <property type="molecule type" value="Genomic_DNA"/>
</dbReference>
<dbReference type="EMBL" id="AY149440">
    <property type="protein sequence ID" value="AAN12916.1"/>
    <property type="molecule type" value="mRNA"/>
</dbReference>
<dbReference type="EMBL" id="BT004539">
    <property type="protein sequence ID" value="AAO42785.1"/>
    <property type="molecule type" value="mRNA"/>
</dbReference>
<dbReference type="RefSeq" id="NP_176469.1">
    <property type="nucleotide sequence ID" value="NM_104959.4"/>
</dbReference>
<dbReference type="SMR" id="Q8H1H9"/>
<dbReference type="BioGRID" id="27801">
    <property type="interactions" value="1"/>
</dbReference>
<dbReference type="FunCoup" id="Q8H1H9">
    <property type="interactions" value="196"/>
</dbReference>
<dbReference type="STRING" id="3702.Q8H1H9"/>
<dbReference type="GlyCosmos" id="Q8H1H9">
    <property type="glycosylation" value="4 sites, No reported glycans"/>
</dbReference>
<dbReference type="GlyGen" id="Q8H1H9">
    <property type="glycosylation" value="6 sites"/>
</dbReference>
<dbReference type="PaxDb" id="3702-AT1G62810.1"/>
<dbReference type="ProteomicsDB" id="244972"/>
<dbReference type="EnsemblPlants" id="AT1G62810.1">
    <property type="protein sequence ID" value="AT1G62810.1"/>
    <property type="gene ID" value="AT1G62810"/>
</dbReference>
<dbReference type="GeneID" id="842580"/>
<dbReference type="Gramene" id="AT1G62810.1">
    <property type="protein sequence ID" value="AT1G62810.1"/>
    <property type="gene ID" value="AT1G62810"/>
</dbReference>
<dbReference type="KEGG" id="ath:AT1G62810"/>
<dbReference type="Araport" id="AT1G62810"/>
<dbReference type="TAIR" id="AT1G62810">
    <property type="gene designation" value="CUAO1"/>
</dbReference>
<dbReference type="eggNOG" id="KOG1186">
    <property type="taxonomic scope" value="Eukaryota"/>
</dbReference>
<dbReference type="HOGENOM" id="CLU_011500_5_4_1"/>
<dbReference type="InParanoid" id="Q8H1H9"/>
<dbReference type="OMA" id="RVIRVQC"/>
<dbReference type="PhylomeDB" id="Q8H1H9"/>
<dbReference type="BioCyc" id="ARA:AT1G62810-MONOMER"/>
<dbReference type="BRENDA" id="1.4.3.21">
    <property type="organism ID" value="399"/>
</dbReference>
<dbReference type="UniPathway" id="UPA00188"/>
<dbReference type="PRO" id="PR:Q8H1H9"/>
<dbReference type="Proteomes" id="UP000006548">
    <property type="component" value="Chromosome 1"/>
</dbReference>
<dbReference type="ExpressionAtlas" id="Q8H1H9">
    <property type="expression patterns" value="baseline and differential"/>
</dbReference>
<dbReference type="GO" id="GO:0048046">
    <property type="term" value="C:apoplast"/>
    <property type="evidence" value="ECO:0007669"/>
    <property type="project" value="UniProtKB-SubCell"/>
</dbReference>
<dbReference type="GO" id="GO:0005615">
    <property type="term" value="C:extracellular space"/>
    <property type="evidence" value="ECO:0000314"/>
    <property type="project" value="UniProtKB"/>
</dbReference>
<dbReference type="GO" id="GO:0052595">
    <property type="term" value="F:aliphatic amine oxidase activity"/>
    <property type="evidence" value="ECO:0000314"/>
    <property type="project" value="UniProtKB"/>
</dbReference>
<dbReference type="GO" id="GO:0005507">
    <property type="term" value="F:copper ion binding"/>
    <property type="evidence" value="ECO:0007669"/>
    <property type="project" value="InterPro"/>
</dbReference>
<dbReference type="GO" id="GO:0008131">
    <property type="term" value="F:primary methylamine oxidase activity"/>
    <property type="evidence" value="ECO:0007669"/>
    <property type="project" value="UniProtKB-EC"/>
</dbReference>
<dbReference type="GO" id="GO:0048038">
    <property type="term" value="F:quinone binding"/>
    <property type="evidence" value="ECO:0007669"/>
    <property type="project" value="InterPro"/>
</dbReference>
<dbReference type="GO" id="GO:0009738">
    <property type="term" value="P:abscisic acid-activated signaling pathway"/>
    <property type="evidence" value="ECO:0000315"/>
    <property type="project" value="TAIR"/>
</dbReference>
<dbReference type="GO" id="GO:0006809">
    <property type="term" value="P:nitric oxide biosynthetic process"/>
    <property type="evidence" value="ECO:0000315"/>
    <property type="project" value="TAIR"/>
</dbReference>
<dbReference type="GO" id="GO:0009447">
    <property type="term" value="P:putrescine catabolic process"/>
    <property type="evidence" value="ECO:0007669"/>
    <property type="project" value="UniProtKB-UniPathway"/>
</dbReference>
<dbReference type="GO" id="GO:0009737">
    <property type="term" value="P:response to abscisic acid"/>
    <property type="evidence" value="ECO:0000270"/>
    <property type="project" value="UniProtKB"/>
</dbReference>
<dbReference type="GO" id="GO:0009733">
    <property type="term" value="P:response to auxin"/>
    <property type="evidence" value="ECO:0000270"/>
    <property type="project" value="UniProtKB"/>
</dbReference>
<dbReference type="GO" id="GO:0009753">
    <property type="term" value="P:response to jasmonic acid"/>
    <property type="evidence" value="ECO:0000270"/>
    <property type="project" value="UniProtKB"/>
</dbReference>
<dbReference type="GO" id="GO:0002237">
    <property type="term" value="P:response to molecule of bacterial origin"/>
    <property type="evidence" value="ECO:0000270"/>
    <property type="project" value="UniProtKB"/>
</dbReference>
<dbReference type="GO" id="GO:1904585">
    <property type="term" value="P:response to putrescine"/>
    <property type="evidence" value="ECO:0000270"/>
    <property type="project" value="UniProtKB"/>
</dbReference>
<dbReference type="GO" id="GO:0009751">
    <property type="term" value="P:response to salicylic acid"/>
    <property type="evidence" value="ECO:0000270"/>
    <property type="project" value="UniProtKB"/>
</dbReference>
<dbReference type="GO" id="GO:0009414">
    <property type="term" value="P:response to water deprivation"/>
    <property type="evidence" value="ECO:0000270"/>
    <property type="project" value="UniProtKB"/>
</dbReference>
<dbReference type="GO" id="GO:0009611">
    <property type="term" value="P:response to wounding"/>
    <property type="evidence" value="ECO:0000270"/>
    <property type="project" value="UniProtKB"/>
</dbReference>
<dbReference type="FunFam" id="2.70.98.20:FF:000004">
    <property type="entry name" value="Amine oxidase"/>
    <property type="match status" value="1"/>
</dbReference>
<dbReference type="FunFam" id="3.10.450.40:FF:000005">
    <property type="entry name" value="Amine oxidase"/>
    <property type="match status" value="1"/>
</dbReference>
<dbReference type="FunFam" id="3.10.450.40:FF:000024">
    <property type="entry name" value="Amine oxidase"/>
    <property type="match status" value="1"/>
</dbReference>
<dbReference type="Gene3D" id="3.10.450.40">
    <property type="match status" value="2"/>
</dbReference>
<dbReference type="Gene3D" id="2.70.98.20">
    <property type="entry name" value="Copper amine oxidase, catalytic domain"/>
    <property type="match status" value="1"/>
</dbReference>
<dbReference type="InterPro" id="IPR049947">
    <property type="entry name" value="Cu_Am_Ox_Cu-bd"/>
</dbReference>
<dbReference type="InterPro" id="IPR000269">
    <property type="entry name" value="Cu_amine_oxidase"/>
</dbReference>
<dbReference type="InterPro" id="IPR015798">
    <property type="entry name" value="Cu_amine_oxidase_C"/>
</dbReference>
<dbReference type="InterPro" id="IPR036460">
    <property type="entry name" value="Cu_amine_oxidase_C_sf"/>
</dbReference>
<dbReference type="InterPro" id="IPR016182">
    <property type="entry name" value="Cu_amine_oxidase_N-reg"/>
</dbReference>
<dbReference type="InterPro" id="IPR015800">
    <property type="entry name" value="Cu_amine_oxidase_N2"/>
</dbReference>
<dbReference type="InterPro" id="IPR015802">
    <property type="entry name" value="Cu_amine_oxidase_N3"/>
</dbReference>
<dbReference type="PANTHER" id="PTHR10638:SF69">
    <property type="entry name" value="AMINE OXIDASE [COPPER-CONTAINING] GAMMA 1-RELATED"/>
    <property type="match status" value="1"/>
</dbReference>
<dbReference type="PANTHER" id="PTHR10638">
    <property type="entry name" value="COPPER AMINE OXIDASE"/>
    <property type="match status" value="1"/>
</dbReference>
<dbReference type="Pfam" id="PF01179">
    <property type="entry name" value="Cu_amine_oxid"/>
    <property type="match status" value="1"/>
</dbReference>
<dbReference type="Pfam" id="PF02727">
    <property type="entry name" value="Cu_amine_oxidN2"/>
    <property type="match status" value="1"/>
</dbReference>
<dbReference type="Pfam" id="PF02728">
    <property type="entry name" value="Cu_amine_oxidN3"/>
    <property type="match status" value="1"/>
</dbReference>
<dbReference type="SUPFAM" id="SSF49998">
    <property type="entry name" value="Amine oxidase catalytic domain"/>
    <property type="match status" value="1"/>
</dbReference>
<dbReference type="SUPFAM" id="SSF54416">
    <property type="entry name" value="Amine oxidase N-terminal region"/>
    <property type="match status" value="2"/>
</dbReference>
<dbReference type="PROSITE" id="PS01165">
    <property type="entry name" value="COPPER_AMINE_OXID_2"/>
    <property type="match status" value="1"/>
</dbReference>
<proteinExistence type="evidence at protein level"/>
<keyword id="KW-0938">Abscisic acid signaling pathway</keyword>
<keyword id="KW-0052">Apoplast</keyword>
<keyword id="KW-0186">Copper</keyword>
<keyword id="KW-1015">Disulfide bond</keyword>
<keyword id="KW-0325">Glycoprotein</keyword>
<keyword id="KW-0479">Metal-binding</keyword>
<keyword id="KW-0560">Oxidoreductase</keyword>
<keyword id="KW-1185">Reference proteome</keyword>
<keyword id="KW-0964">Secreted</keyword>
<keyword id="KW-0732">Signal</keyword>
<keyword id="KW-0801">TPQ</keyword>
<reference key="1">
    <citation type="journal article" date="2000" name="Nature">
        <title>Sequence and analysis of chromosome 1 of the plant Arabidopsis thaliana.</title>
        <authorList>
            <person name="Theologis A."/>
            <person name="Ecker J.R."/>
            <person name="Palm C.J."/>
            <person name="Federspiel N.A."/>
            <person name="Kaul S."/>
            <person name="White O."/>
            <person name="Alonso J."/>
            <person name="Altafi H."/>
            <person name="Araujo R."/>
            <person name="Bowman C.L."/>
            <person name="Brooks S.Y."/>
            <person name="Buehler E."/>
            <person name="Chan A."/>
            <person name="Chao Q."/>
            <person name="Chen H."/>
            <person name="Cheuk R.F."/>
            <person name="Chin C.W."/>
            <person name="Chung M.K."/>
            <person name="Conn L."/>
            <person name="Conway A.B."/>
            <person name="Conway A.R."/>
            <person name="Creasy T.H."/>
            <person name="Dewar K."/>
            <person name="Dunn P."/>
            <person name="Etgu P."/>
            <person name="Feldblyum T.V."/>
            <person name="Feng J.-D."/>
            <person name="Fong B."/>
            <person name="Fujii C.Y."/>
            <person name="Gill J.E."/>
            <person name="Goldsmith A.D."/>
            <person name="Haas B."/>
            <person name="Hansen N.F."/>
            <person name="Hughes B."/>
            <person name="Huizar L."/>
            <person name="Hunter J.L."/>
            <person name="Jenkins J."/>
            <person name="Johnson-Hopson C."/>
            <person name="Khan S."/>
            <person name="Khaykin E."/>
            <person name="Kim C.J."/>
            <person name="Koo H.L."/>
            <person name="Kremenetskaia I."/>
            <person name="Kurtz D.B."/>
            <person name="Kwan A."/>
            <person name="Lam B."/>
            <person name="Langin-Hooper S."/>
            <person name="Lee A."/>
            <person name="Lee J.M."/>
            <person name="Lenz C.A."/>
            <person name="Li J.H."/>
            <person name="Li Y.-P."/>
            <person name="Lin X."/>
            <person name="Liu S.X."/>
            <person name="Liu Z.A."/>
            <person name="Luros J.S."/>
            <person name="Maiti R."/>
            <person name="Marziali A."/>
            <person name="Militscher J."/>
            <person name="Miranda M."/>
            <person name="Nguyen M."/>
            <person name="Nierman W.C."/>
            <person name="Osborne B.I."/>
            <person name="Pai G."/>
            <person name="Peterson J."/>
            <person name="Pham P.K."/>
            <person name="Rizzo M."/>
            <person name="Rooney T."/>
            <person name="Rowley D."/>
            <person name="Sakano H."/>
            <person name="Salzberg S.L."/>
            <person name="Schwartz J.R."/>
            <person name="Shinn P."/>
            <person name="Southwick A.M."/>
            <person name="Sun H."/>
            <person name="Tallon L.J."/>
            <person name="Tambunga G."/>
            <person name="Toriumi M.J."/>
            <person name="Town C.D."/>
            <person name="Utterback T."/>
            <person name="Van Aken S."/>
            <person name="Vaysberg M."/>
            <person name="Vysotskaia V.S."/>
            <person name="Walker M."/>
            <person name="Wu D."/>
            <person name="Yu G."/>
            <person name="Fraser C.M."/>
            <person name="Venter J.C."/>
            <person name="Davis R.W."/>
        </authorList>
    </citation>
    <scope>NUCLEOTIDE SEQUENCE [LARGE SCALE GENOMIC DNA]</scope>
    <source>
        <strain>cv. Columbia</strain>
    </source>
</reference>
<reference key="2">
    <citation type="journal article" date="2017" name="Plant J.">
        <title>Araport11: a complete reannotation of the Arabidopsis thaliana reference genome.</title>
        <authorList>
            <person name="Cheng C.Y."/>
            <person name="Krishnakumar V."/>
            <person name="Chan A.P."/>
            <person name="Thibaud-Nissen F."/>
            <person name="Schobel S."/>
            <person name="Town C.D."/>
        </authorList>
    </citation>
    <scope>GENOME REANNOTATION</scope>
    <source>
        <strain>cv. Columbia</strain>
    </source>
</reference>
<reference key="3">
    <citation type="journal article" date="2003" name="Science">
        <title>Empirical analysis of transcriptional activity in the Arabidopsis genome.</title>
        <authorList>
            <person name="Yamada K."/>
            <person name="Lim J."/>
            <person name="Dale J.M."/>
            <person name="Chen H."/>
            <person name="Shinn P."/>
            <person name="Palm C.J."/>
            <person name="Southwick A.M."/>
            <person name="Wu H.C."/>
            <person name="Kim C.J."/>
            <person name="Nguyen M."/>
            <person name="Pham P.K."/>
            <person name="Cheuk R.F."/>
            <person name="Karlin-Newmann G."/>
            <person name="Liu S.X."/>
            <person name="Lam B."/>
            <person name="Sakano H."/>
            <person name="Wu T."/>
            <person name="Yu G."/>
            <person name="Miranda M."/>
            <person name="Quach H.L."/>
            <person name="Tripp M."/>
            <person name="Chang C.H."/>
            <person name="Lee J.M."/>
            <person name="Toriumi M.J."/>
            <person name="Chan M.M."/>
            <person name="Tang C.C."/>
            <person name="Onodera C.S."/>
            <person name="Deng J.M."/>
            <person name="Akiyama K."/>
            <person name="Ansari Y."/>
            <person name="Arakawa T."/>
            <person name="Banh J."/>
            <person name="Banno F."/>
            <person name="Bowser L."/>
            <person name="Brooks S.Y."/>
            <person name="Carninci P."/>
            <person name="Chao Q."/>
            <person name="Choy N."/>
            <person name="Enju A."/>
            <person name="Goldsmith A.D."/>
            <person name="Gurjal M."/>
            <person name="Hansen N.F."/>
            <person name="Hayashizaki Y."/>
            <person name="Johnson-Hopson C."/>
            <person name="Hsuan V.W."/>
            <person name="Iida K."/>
            <person name="Karnes M."/>
            <person name="Khan S."/>
            <person name="Koesema E."/>
            <person name="Ishida J."/>
            <person name="Jiang P.X."/>
            <person name="Jones T."/>
            <person name="Kawai J."/>
            <person name="Kamiya A."/>
            <person name="Meyers C."/>
            <person name="Nakajima M."/>
            <person name="Narusaka M."/>
            <person name="Seki M."/>
            <person name="Sakurai T."/>
            <person name="Satou M."/>
            <person name="Tamse R."/>
            <person name="Vaysberg M."/>
            <person name="Wallender E.K."/>
            <person name="Wong C."/>
            <person name="Yamamura Y."/>
            <person name="Yuan S."/>
            <person name="Shinozaki K."/>
            <person name="Davis R.W."/>
            <person name="Theologis A."/>
            <person name="Ecker J.R."/>
        </authorList>
    </citation>
    <scope>NUCLEOTIDE SEQUENCE [LARGE SCALE MRNA]</scope>
    <source>
        <strain>cv. Columbia</strain>
    </source>
</reference>
<reference key="4">
    <citation type="journal article" date="2011" name="Mol. Plant">
        <title>COPPER AMINE OXIDASE1 (CuAO1) of Arabidopsis thaliana contributes to abscisic acid- and polyamine-induced nitric oxide biosynthesis and abscisic acid signal transduction.</title>
        <authorList>
            <person name="Wimalasekera R."/>
            <person name="Villar C."/>
            <person name="Begum T."/>
            <person name="Scherer G.F.E."/>
        </authorList>
    </citation>
    <scope>FUNCTION</scope>
    <scope>DISRUPTION PHENOTYPE</scope>
    <scope>TISSUE SPECIFICITY</scope>
    <scope>DEVELOPMENTAL STAGE</scope>
    <scope>INDUCTION BY ABSCISIC ACID</scope>
    <source>
        <strain>cv. Columbia</strain>
        <strain>cv. No-0</strain>
    </source>
</reference>
<reference key="5">
    <citation type="journal article" date="2013" name="BMC Plant Biol.">
        <title>Copper-containing amine oxidases contribute to terminal polyamine oxidation in peroxisomes and apoplast of Arabidopsis thaliana.</title>
        <authorList>
            <person name="Planas-Portell J."/>
            <person name="Gallart M."/>
            <person name="Tiburcio A.F."/>
            <person name="Altabella T."/>
        </authorList>
    </citation>
    <scope>FUNCTION</scope>
    <scope>CATALYTIC ACTIVITY</scope>
    <scope>PATHWAY</scope>
    <scope>SUBCELLULAR LOCATION</scope>
    <scope>TISSUE SPECIFICITY</scope>
    <scope>DEVELOPMENTAL STAGE</scope>
    <scope>INDUCTION BY SALICYLIC ACID; JASMONATE; FLAGELLIN AND ABCISIC ACID</scope>
    <scope>GENE FAMILY</scope>
    <scope>NOMENCLATURE</scope>
    <source>
        <strain>cv. Columbia</strain>
    </source>
</reference>
<reference key="6">
    <citation type="journal article" date="2020" name="Plant Physiol. Biochem.">
        <title>Developmental, hormone- and stress-modulated expression profiles of four members of the Arabidopsis copper-amine oxidase gene family.</title>
        <authorList>
            <person name="Fraudentali I."/>
            <person name="Ghuge S.A."/>
            <person name="Carucci A."/>
            <person name="Tavladoraki P."/>
            <person name="Angelini R."/>
            <person name="Rodrigues-Pousada R.A."/>
            <person name="Cona A."/>
        </authorList>
    </citation>
    <scope>TISSUE SPECIFICITY</scope>
    <scope>DEVELOPMENTAL STAGE</scope>
    <scope>INDUCTION BY JASMONATE; ABSCISIC ACID; SALICYLIC ACID; WOUNDING; DEHYDRATION RECOVERY; PUTRESCINE AND AUXIN</scope>
    <scope>GENE FAMILY</scope>
    <scope>NOMENCLATURE</scope>
    <source>
        <strain>cv. Columbia</strain>
    </source>
</reference>
<name>CAOG1_ARATH</name>
<accession>Q8H1H9</accession>
<accession>Q84W14</accession>
<accession>Q9SI68</accession>
<protein>
    <recommendedName>
        <fullName evidence="12">Amine oxidase [copper-containing] gamma 1</fullName>
        <shortName evidence="10 11">AtCuAO1</shortName>
        <shortName evidence="12">AtCuAOgamma1</shortName>
        <shortName evidence="10">Copper amine oxidase 1</shortName>
        <ecNumber evidence="8">1.4.3.21</ecNumber>
    </recommendedName>
    <alternativeName>
        <fullName evidence="13">Primary amine oxidase 1</fullName>
    </alternativeName>
</protein>